<gene>
    <name type="primary">plcxd1</name>
    <name type="ORF">zgc:112023</name>
</gene>
<reference key="1">
    <citation type="submission" date="2005-04" db="EMBL/GenBank/DDBJ databases">
        <authorList>
            <consortium name="NIH - Zebrafish Gene Collection (ZGC) project"/>
        </authorList>
    </citation>
    <scope>NUCLEOTIDE SEQUENCE [LARGE SCALE MRNA]</scope>
    <source>
        <tissue>Olfactory epithelium</tissue>
    </source>
</reference>
<sequence length="309" mass="35480">MEDEDCYEDWMSKMPSHMWDIPLWNLAIPGSHDSMTYCLDKQSSVSNSTPRVVQVLDKYFPCIVRPCIMKWATTQEGAISNQLDLGIRFLDLRIAHKIKDPDEVFYFAHGVYSLLTVKEALTEVVRWLDQHIKEVVIIALSNFEGMNLDQHKDLIQFLIATFNKKICPKSVTPSLQECWNHSYQVILSYDDESSTGYVELWPQCPYWWANKSDPNLVISYLEDQKNEGRPSQFFAAGLNLTEDARYVLCHPCQSLQSMTRRSYSLLMKWVKQQRPGSGQACLNIICADFVGIFGSESTQLVIGLNQIEA</sequence>
<proteinExistence type="evidence at transcript level"/>
<feature type="chain" id="PRO_0000304806" description="PI-PLC X domain-containing protein 1">
    <location>
        <begin position="1"/>
        <end position="309"/>
    </location>
</feature>
<feature type="domain" description="PI-PLC X-box" evidence="1">
    <location>
        <begin position="17"/>
        <end position="193"/>
    </location>
</feature>
<organism>
    <name type="scientific">Danio rerio</name>
    <name type="common">Zebrafish</name>
    <name type="synonym">Brachydanio rerio</name>
    <dbReference type="NCBI Taxonomy" id="7955"/>
    <lineage>
        <taxon>Eukaryota</taxon>
        <taxon>Metazoa</taxon>
        <taxon>Chordata</taxon>
        <taxon>Craniata</taxon>
        <taxon>Vertebrata</taxon>
        <taxon>Euteleostomi</taxon>
        <taxon>Actinopterygii</taxon>
        <taxon>Neopterygii</taxon>
        <taxon>Teleostei</taxon>
        <taxon>Ostariophysi</taxon>
        <taxon>Cypriniformes</taxon>
        <taxon>Danionidae</taxon>
        <taxon>Danioninae</taxon>
        <taxon>Danio</taxon>
    </lineage>
</organism>
<dbReference type="EMBL" id="BC093162">
    <property type="protein sequence ID" value="AAH93162.1"/>
    <property type="molecule type" value="mRNA"/>
</dbReference>
<dbReference type="RefSeq" id="NP_001017673.1">
    <property type="nucleotide sequence ID" value="NM_001017673.1"/>
</dbReference>
<dbReference type="SMR" id="Q567I4"/>
<dbReference type="FunCoup" id="Q567I4">
    <property type="interactions" value="2"/>
</dbReference>
<dbReference type="STRING" id="7955.ENSDARP00000137094"/>
<dbReference type="PaxDb" id="7955-ENSDARP00000095749"/>
<dbReference type="GeneID" id="550368"/>
<dbReference type="KEGG" id="dre:550368"/>
<dbReference type="AGR" id="ZFIN:ZDB-GENE-050417-162"/>
<dbReference type="ZFIN" id="ZDB-GENE-050417-162">
    <property type="gene designation" value="zgc:112023"/>
</dbReference>
<dbReference type="eggNOG" id="KOG4306">
    <property type="taxonomic scope" value="Eukaryota"/>
</dbReference>
<dbReference type="InParanoid" id="Q567I4"/>
<dbReference type="OrthoDB" id="1046782at2759"/>
<dbReference type="PhylomeDB" id="Q567I4"/>
<dbReference type="PRO" id="PR:Q567I4"/>
<dbReference type="Proteomes" id="UP000000437">
    <property type="component" value="Alternate scaffold 6"/>
</dbReference>
<dbReference type="Proteomes" id="UP000000437">
    <property type="component" value="Chromosome 6"/>
</dbReference>
<dbReference type="GO" id="GO:0008081">
    <property type="term" value="F:phosphoric diester hydrolase activity"/>
    <property type="evidence" value="ECO:0000318"/>
    <property type="project" value="GO_Central"/>
</dbReference>
<dbReference type="GO" id="GO:0006629">
    <property type="term" value="P:lipid metabolic process"/>
    <property type="evidence" value="ECO:0007669"/>
    <property type="project" value="InterPro"/>
</dbReference>
<dbReference type="CDD" id="cd08616">
    <property type="entry name" value="PI-PLCXD1c"/>
    <property type="match status" value="1"/>
</dbReference>
<dbReference type="Gene3D" id="3.20.20.190">
    <property type="entry name" value="Phosphatidylinositol (PI) phosphodiesterase"/>
    <property type="match status" value="1"/>
</dbReference>
<dbReference type="InterPro" id="IPR051057">
    <property type="entry name" value="PI-PLC_domain"/>
</dbReference>
<dbReference type="InterPro" id="IPR017946">
    <property type="entry name" value="PLC-like_Pdiesterase_TIM-brl"/>
</dbReference>
<dbReference type="InterPro" id="IPR042158">
    <property type="entry name" value="PLCXD1/2/3"/>
</dbReference>
<dbReference type="InterPro" id="IPR000909">
    <property type="entry name" value="PLipase_C_PInositol-sp_X_dom"/>
</dbReference>
<dbReference type="PANTHER" id="PTHR13593">
    <property type="match status" value="1"/>
</dbReference>
<dbReference type="PANTHER" id="PTHR13593:SF24">
    <property type="entry name" value="PI-PLC X DOMAIN-CONTAINING PROTEIN 1"/>
    <property type="match status" value="1"/>
</dbReference>
<dbReference type="Pfam" id="PF00388">
    <property type="entry name" value="PI-PLC-X"/>
    <property type="match status" value="1"/>
</dbReference>
<dbReference type="SUPFAM" id="SSF51695">
    <property type="entry name" value="PLC-like phosphodiesterases"/>
    <property type="match status" value="1"/>
</dbReference>
<dbReference type="PROSITE" id="PS50007">
    <property type="entry name" value="PIPLC_X_DOMAIN"/>
    <property type="match status" value="1"/>
</dbReference>
<evidence type="ECO:0000255" key="1">
    <source>
        <dbReference type="PROSITE-ProRule" id="PRU00270"/>
    </source>
</evidence>
<name>PLCX1_DANRE</name>
<protein>
    <recommendedName>
        <fullName>PI-PLC X domain-containing protein 1</fullName>
    </recommendedName>
</protein>
<keyword id="KW-1185">Reference proteome</keyword>
<accession>Q567I4</accession>